<evidence type="ECO:0000256" key="1">
    <source>
        <dbReference type="SAM" id="MobiDB-lite"/>
    </source>
</evidence>
<sequence length="1187" mass="134629">MYSHFKIHIGNELPNTINNYNNNNNSQHNDKMNLSKIKNNQDIPTSNTNISPKPISQQKRRKVEKGGVECKPIVPSTSSTSTLIPTPPPKLPQQQQELQHHSKPSSSSSSSSSSLSSSSTSIPNSPTPIFPVFLIPTQNMDLTCSYSNSQNYVESNINNNINNNINNNNNNNANNIQYINSNTYSGGCISRSSSSSSSSSSSSSGKSNENSIHLNSINNDNNNYYNKVLCYLNQLEDDQRKQYLFQQTQPPQPYPQQIQPPQEQLQQHQSQAPHSPLPQPQPPSQLQTQSIFQISPIPQNNSTQQILIQQTQIHITSTPNQTPISTPQQLGNQQFQFYQASKSTIIEKNNINIQINKNNNSGEFSTNSETNISSSNENINSNNNTKIDNNSNTSNGFNSNSNNNNNNNNNNNSNSVQLNYIEYDGINLNNQIFMNSDFNNEFFPNNTDENYPSDHNSNDNNNDKNNNTNNNIIINDDNNNNPNNNNINNNNSIEIIDEQKHQLQLQELQLQQEQQQEQQQEQLQQCHIEIIKNNSQFPFTPNTTESGFSSTSTTPSSTSVPSSLSNSSSAIPPPSSNYLDCSEPINNLESFNYNNSNTNTNNINNNNNNNNNNNNNNNNNNNNNNNNNNNNIENINIKNSNSNINSGYKSNINCSSPNRTVPNSPISNYSSMSSSSSPNSFTSSTSSLNISCSPNSDPLTPIVPTTPTLIEQTFQIQQPSFENIKNNTQISPSSHDGDTISEVIINHINNNSINNNNNNDKNNDIDNSNENLTTTTTTTTTTTTTTTTNNNKKKINNYKINNYNNNIDNNNHELNDDDNDDDDDDDVDDNDDNNNNNKSIYKKKEIKKREIRDELERKNEPKRRELIKKFIESKDSKFKKLTTDELLIMSPKVFGKISRYNMFEVFFGNEEVCGGNIKVSDTIKYRDQLEQILKKVWSTNEYWRCPLCEDIIISQKSFSQPHENRFSNKSCLKYHLLRLHFADVKSTIVKKRKIESRDMSSDPRYRKCKHDDCHSWITSKHMCDHIIIDHHIDDPQKSKTCGKCNELKKKLKKDFFNNINHYYESNKLSDLKIEYNNNHNNNINTNNNNNNNNNNNNNNNNNNNNNNNNNNNNNNNNNNNNNINNNNTNNNFKTIITTTTTSTTTPSNNIDDDNNKNNNNNNNNNNNNNNNNTNPIPNLPMPKNLQK</sequence>
<reference key="1">
    <citation type="journal article" date="2005" name="Nature">
        <title>The genome of the social amoeba Dictyostelium discoideum.</title>
        <authorList>
            <person name="Eichinger L."/>
            <person name="Pachebat J.A."/>
            <person name="Gloeckner G."/>
            <person name="Rajandream M.A."/>
            <person name="Sucgang R."/>
            <person name="Berriman M."/>
            <person name="Song J."/>
            <person name="Olsen R."/>
            <person name="Szafranski K."/>
            <person name="Xu Q."/>
            <person name="Tunggal B."/>
            <person name="Kummerfeld S."/>
            <person name="Madera M."/>
            <person name="Konfortov B.A."/>
            <person name="Rivero F."/>
            <person name="Bankier A.T."/>
            <person name="Lehmann R."/>
            <person name="Hamlin N."/>
            <person name="Davies R."/>
            <person name="Gaudet P."/>
            <person name="Fey P."/>
            <person name="Pilcher K."/>
            <person name="Chen G."/>
            <person name="Saunders D."/>
            <person name="Sodergren E.J."/>
            <person name="Davis P."/>
            <person name="Kerhornou A."/>
            <person name="Nie X."/>
            <person name="Hall N."/>
            <person name="Anjard C."/>
            <person name="Hemphill L."/>
            <person name="Bason N."/>
            <person name="Farbrother P."/>
            <person name="Desany B."/>
            <person name="Just E."/>
            <person name="Morio T."/>
            <person name="Rost R."/>
            <person name="Churcher C.M."/>
            <person name="Cooper J."/>
            <person name="Haydock S."/>
            <person name="van Driessche N."/>
            <person name="Cronin A."/>
            <person name="Goodhead I."/>
            <person name="Muzny D.M."/>
            <person name="Mourier T."/>
            <person name="Pain A."/>
            <person name="Lu M."/>
            <person name="Harper D."/>
            <person name="Lindsay R."/>
            <person name="Hauser H."/>
            <person name="James K.D."/>
            <person name="Quiles M."/>
            <person name="Madan Babu M."/>
            <person name="Saito T."/>
            <person name="Buchrieser C."/>
            <person name="Wardroper A."/>
            <person name="Felder M."/>
            <person name="Thangavelu M."/>
            <person name="Johnson D."/>
            <person name="Knights A."/>
            <person name="Loulseged H."/>
            <person name="Mungall K.L."/>
            <person name="Oliver K."/>
            <person name="Price C."/>
            <person name="Quail M.A."/>
            <person name="Urushihara H."/>
            <person name="Hernandez J."/>
            <person name="Rabbinowitsch E."/>
            <person name="Steffen D."/>
            <person name="Sanders M."/>
            <person name="Ma J."/>
            <person name="Kohara Y."/>
            <person name="Sharp S."/>
            <person name="Simmonds M.N."/>
            <person name="Spiegler S."/>
            <person name="Tivey A."/>
            <person name="Sugano S."/>
            <person name="White B."/>
            <person name="Walker D."/>
            <person name="Woodward J.R."/>
            <person name="Winckler T."/>
            <person name="Tanaka Y."/>
            <person name="Shaulsky G."/>
            <person name="Schleicher M."/>
            <person name="Weinstock G.M."/>
            <person name="Rosenthal A."/>
            <person name="Cox E.C."/>
            <person name="Chisholm R.L."/>
            <person name="Gibbs R.A."/>
            <person name="Loomis W.F."/>
            <person name="Platzer M."/>
            <person name="Kay R.R."/>
            <person name="Williams J.G."/>
            <person name="Dear P.H."/>
            <person name="Noegel A.A."/>
            <person name="Barrell B.G."/>
            <person name="Kuspa A."/>
        </authorList>
    </citation>
    <scope>NUCLEOTIDE SEQUENCE [LARGE SCALE GENOMIC DNA]</scope>
    <source>
        <strain>AX4</strain>
    </source>
</reference>
<feature type="chain" id="PRO_0000344399" description="Putative uncharacterized protein DDB_G0291812">
    <location>
        <begin position="1"/>
        <end position="1187"/>
    </location>
</feature>
<feature type="region of interest" description="Disordered" evidence="1">
    <location>
        <begin position="38"/>
        <end position="127"/>
    </location>
</feature>
<feature type="region of interest" description="Disordered" evidence="1">
    <location>
        <begin position="189"/>
        <end position="215"/>
    </location>
</feature>
<feature type="region of interest" description="Disordered" evidence="1">
    <location>
        <begin position="248"/>
        <end position="287"/>
    </location>
</feature>
<feature type="region of interest" description="Disordered" evidence="1">
    <location>
        <begin position="358"/>
        <end position="415"/>
    </location>
</feature>
<feature type="region of interest" description="Disordered" evidence="1">
    <location>
        <begin position="443"/>
        <end position="490"/>
    </location>
</feature>
<feature type="region of interest" description="Disordered" evidence="1">
    <location>
        <begin position="536"/>
        <end position="689"/>
    </location>
</feature>
<feature type="region of interest" description="Disordered" evidence="1">
    <location>
        <begin position="752"/>
        <end position="840"/>
    </location>
</feature>
<feature type="region of interest" description="Disordered" evidence="1">
    <location>
        <begin position="1079"/>
        <end position="1187"/>
    </location>
</feature>
<feature type="compositionally biased region" description="Polar residues" evidence="1">
    <location>
        <begin position="38"/>
        <end position="57"/>
    </location>
</feature>
<feature type="compositionally biased region" description="Low complexity" evidence="1">
    <location>
        <begin position="71"/>
        <end position="84"/>
    </location>
</feature>
<feature type="compositionally biased region" description="Low complexity" evidence="1">
    <location>
        <begin position="104"/>
        <end position="124"/>
    </location>
</feature>
<feature type="compositionally biased region" description="Low complexity" evidence="1">
    <location>
        <begin position="190"/>
        <end position="215"/>
    </location>
</feature>
<feature type="compositionally biased region" description="Low complexity" evidence="1">
    <location>
        <begin position="248"/>
        <end position="274"/>
    </location>
</feature>
<feature type="compositionally biased region" description="Polar residues" evidence="1">
    <location>
        <begin position="443"/>
        <end position="455"/>
    </location>
</feature>
<feature type="compositionally biased region" description="Low complexity" evidence="1">
    <location>
        <begin position="458"/>
        <end position="490"/>
    </location>
</feature>
<feature type="compositionally biased region" description="Low complexity" evidence="1">
    <location>
        <begin position="543"/>
        <end position="570"/>
    </location>
</feature>
<feature type="compositionally biased region" description="Low complexity" evidence="1">
    <location>
        <begin position="585"/>
        <end position="653"/>
    </location>
</feature>
<feature type="compositionally biased region" description="Low complexity" evidence="1">
    <location>
        <begin position="662"/>
        <end position="689"/>
    </location>
</feature>
<feature type="compositionally biased region" description="Low complexity" evidence="1">
    <location>
        <begin position="752"/>
        <end position="790"/>
    </location>
</feature>
<feature type="compositionally biased region" description="Low complexity" evidence="1">
    <location>
        <begin position="797"/>
        <end position="809"/>
    </location>
</feature>
<feature type="compositionally biased region" description="Acidic residues" evidence="1">
    <location>
        <begin position="815"/>
        <end position="832"/>
    </location>
</feature>
<feature type="compositionally biased region" description="Low complexity" evidence="1">
    <location>
        <begin position="1079"/>
        <end position="1149"/>
    </location>
</feature>
<feature type="compositionally biased region" description="Low complexity" evidence="1">
    <location>
        <begin position="1156"/>
        <end position="1174"/>
    </location>
</feature>
<gene>
    <name type="ORF">DDB_G0291812</name>
</gene>
<proteinExistence type="predicted"/>
<accession>Q54E43</accession>
<protein>
    <recommendedName>
        <fullName>Putative uncharacterized protein DDB_G0291812</fullName>
    </recommendedName>
</protein>
<organism>
    <name type="scientific">Dictyostelium discoideum</name>
    <name type="common">Social amoeba</name>
    <dbReference type="NCBI Taxonomy" id="44689"/>
    <lineage>
        <taxon>Eukaryota</taxon>
        <taxon>Amoebozoa</taxon>
        <taxon>Evosea</taxon>
        <taxon>Eumycetozoa</taxon>
        <taxon>Dictyostelia</taxon>
        <taxon>Dictyosteliales</taxon>
        <taxon>Dictyosteliaceae</taxon>
        <taxon>Dictyostelium</taxon>
    </lineage>
</organism>
<keyword id="KW-1185">Reference proteome</keyword>
<name>Y4080_DICDI</name>
<dbReference type="EMBL" id="AAFI02000185">
    <property type="protein sequence ID" value="EAL61527.1"/>
    <property type="molecule type" value="Genomic_DNA"/>
</dbReference>
<dbReference type="RefSeq" id="XP_629944.1">
    <property type="nucleotide sequence ID" value="XM_629942.1"/>
</dbReference>
<dbReference type="PaxDb" id="44689-DDB0184080"/>
<dbReference type="EnsemblProtists" id="EAL61527">
    <property type="protein sequence ID" value="EAL61527"/>
    <property type="gene ID" value="DDB_G0291812"/>
</dbReference>
<dbReference type="GeneID" id="8628350"/>
<dbReference type="KEGG" id="ddi:DDB_G0291812"/>
<dbReference type="dictyBase" id="DDB_G0291812"/>
<dbReference type="VEuPathDB" id="AmoebaDB:DDB_G0291812"/>
<dbReference type="eggNOG" id="ENOG502RHRW">
    <property type="taxonomic scope" value="Eukaryota"/>
</dbReference>
<dbReference type="HOGENOM" id="CLU_272304_0_0_1"/>
<dbReference type="InParanoid" id="Q54E43"/>
<dbReference type="OMA" id="QHAPENI"/>
<dbReference type="PRO" id="PR:Q54E43"/>
<dbReference type="Proteomes" id="UP000002195">
    <property type="component" value="Chromosome 6"/>
</dbReference>
<dbReference type="PANTHER" id="PTHR33416">
    <property type="entry name" value="NUCLEAR PORE COMPLEX PROTEIN NUP1"/>
    <property type="match status" value="1"/>
</dbReference>
<dbReference type="PANTHER" id="PTHR33416:SF20">
    <property type="entry name" value="NUCLEAR PORE COMPLEX PROTEIN NUP1"/>
    <property type="match status" value="1"/>
</dbReference>